<sequence>MTNQTVRGTKDLLFDEWYKFKHIEQTASRISSLYGFLPVQTPIFEYTEVFTKTLGDSSDIITKEMYTFIDKGGKSITLRPEFTAAIVRLLIEKKLQAPIKLFSIGPAFRYERPQKGRQRQFHQINFEVFGIEDPKADIELISLAQHLLTEFGINKNVKLEINSLGDSETITQYREALISYLKKFQNDLSEDSQNRLIKNPLRILDSKDKTDKEIISDAPKISDYYTKESSYFFDQVLNGLQALGIPYTVNSKLVRGLDYYCHTVFEFVTEDLGAQGAVFAGGRYDNLVSSVGGKHTPAIGFAGGIERIMELINYAEKKERPIYIIPIGGEAEEHALTLASELRRNGLYVIYEYSGTLKTRMKKANQANAKVVLIFGDEELSSKTLKIKNMDTGEEKMIARDKTVENI</sequence>
<evidence type="ECO:0000255" key="1">
    <source>
        <dbReference type="HAMAP-Rule" id="MF_00127"/>
    </source>
</evidence>
<protein>
    <recommendedName>
        <fullName evidence="1">Histidine--tRNA ligase</fullName>
        <ecNumber evidence="1">6.1.1.21</ecNumber>
    </recommendedName>
    <alternativeName>
        <fullName evidence="1">Histidyl-tRNA synthetase</fullName>
        <shortName evidence="1">HisRS</shortName>
    </alternativeName>
</protein>
<organism>
    <name type="scientific">Wolbachia pipientis subsp. Culex pipiens (strain wPip)</name>
    <dbReference type="NCBI Taxonomy" id="570417"/>
    <lineage>
        <taxon>Bacteria</taxon>
        <taxon>Pseudomonadati</taxon>
        <taxon>Pseudomonadota</taxon>
        <taxon>Alphaproteobacteria</taxon>
        <taxon>Rickettsiales</taxon>
        <taxon>Anaplasmataceae</taxon>
        <taxon>Wolbachieae</taxon>
        <taxon>Wolbachia</taxon>
    </lineage>
</organism>
<name>SYH_WOLPP</name>
<proteinExistence type="inferred from homology"/>
<feature type="chain" id="PRO_1000095611" description="Histidine--tRNA ligase">
    <location>
        <begin position="1"/>
        <end position="407"/>
    </location>
</feature>
<gene>
    <name evidence="1" type="primary">hisS</name>
    <name type="ordered locus">WP0726</name>
</gene>
<dbReference type="EC" id="6.1.1.21" evidence="1"/>
<dbReference type="EMBL" id="AM999887">
    <property type="protein sequence ID" value="CAQ54834.1"/>
    <property type="molecule type" value="Genomic_DNA"/>
</dbReference>
<dbReference type="RefSeq" id="WP_007302144.1">
    <property type="nucleotide sequence ID" value="NC_010981.1"/>
</dbReference>
<dbReference type="SMR" id="B3CLR6"/>
<dbReference type="KEGG" id="wpi:WP0726"/>
<dbReference type="eggNOG" id="COG0124">
    <property type="taxonomic scope" value="Bacteria"/>
</dbReference>
<dbReference type="HOGENOM" id="CLU_025113_1_1_5"/>
<dbReference type="Proteomes" id="UP000008814">
    <property type="component" value="Chromosome"/>
</dbReference>
<dbReference type="GO" id="GO:0005737">
    <property type="term" value="C:cytoplasm"/>
    <property type="evidence" value="ECO:0007669"/>
    <property type="project" value="UniProtKB-SubCell"/>
</dbReference>
<dbReference type="GO" id="GO:0005524">
    <property type="term" value="F:ATP binding"/>
    <property type="evidence" value="ECO:0007669"/>
    <property type="project" value="UniProtKB-UniRule"/>
</dbReference>
<dbReference type="GO" id="GO:0004821">
    <property type="term" value="F:histidine-tRNA ligase activity"/>
    <property type="evidence" value="ECO:0007669"/>
    <property type="project" value="UniProtKB-UniRule"/>
</dbReference>
<dbReference type="GO" id="GO:0006427">
    <property type="term" value="P:histidyl-tRNA aminoacylation"/>
    <property type="evidence" value="ECO:0007669"/>
    <property type="project" value="UniProtKB-UniRule"/>
</dbReference>
<dbReference type="CDD" id="cd00773">
    <property type="entry name" value="HisRS-like_core"/>
    <property type="match status" value="1"/>
</dbReference>
<dbReference type="CDD" id="cd00859">
    <property type="entry name" value="HisRS_anticodon"/>
    <property type="match status" value="1"/>
</dbReference>
<dbReference type="Gene3D" id="3.40.50.800">
    <property type="entry name" value="Anticodon-binding domain"/>
    <property type="match status" value="1"/>
</dbReference>
<dbReference type="Gene3D" id="3.30.930.10">
    <property type="entry name" value="Bira Bifunctional Protein, Domain 2"/>
    <property type="match status" value="1"/>
</dbReference>
<dbReference type="HAMAP" id="MF_00127">
    <property type="entry name" value="His_tRNA_synth"/>
    <property type="match status" value="1"/>
</dbReference>
<dbReference type="InterPro" id="IPR006195">
    <property type="entry name" value="aa-tRNA-synth_II"/>
</dbReference>
<dbReference type="InterPro" id="IPR045864">
    <property type="entry name" value="aa-tRNA-synth_II/BPL/LPL"/>
</dbReference>
<dbReference type="InterPro" id="IPR004154">
    <property type="entry name" value="Anticodon-bd"/>
</dbReference>
<dbReference type="InterPro" id="IPR036621">
    <property type="entry name" value="Anticodon-bd_dom_sf"/>
</dbReference>
<dbReference type="InterPro" id="IPR015807">
    <property type="entry name" value="His-tRNA-ligase"/>
</dbReference>
<dbReference type="InterPro" id="IPR041715">
    <property type="entry name" value="HisRS-like_core"/>
</dbReference>
<dbReference type="InterPro" id="IPR004516">
    <property type="entry name" value="HisRS/HisZ"/>
</dbReference>
<dbReference type="InterPro" id="IPR033656">
    <property type="entry name" value="HisRS_anticodon"/>
</dbReference>
<dbReference type="NCBIfam" id="TIGR00442">
    <property type="entry name" value="hisS"/>
    <property type="match status" value="1"/>
</dbReference>
<dbReference type="PANTHER" id="PTHR43707:SF1">
    <property type="entry name" value="HISTIDINE--TRNA LIGASE, MITOCHONDRIAL-RELATED"/>
    <property type="match status" value="1"/>
</dbReference>
<dbReference type="PANTHER" id="PTHR43707">
    <property type="entry name" value="HISTIDYL-TRNA SYNTHETASE"/>
    <property type="match status" value="1"/>
</dbReference>
<dbReference type="Pfam" id="PF03129">
    <property type="entry name" value="HGTP_anticodon"/>
    <property type="match status" value="1"/>
</dbReference>
<dbReference type="Pfam" id="PF13393">
    <property type="entry name" value="tRNA-synt_His"/>
    <property type="match status" value="1"/>
</dbReference>
<dbReference type="PIRSF" id="PIRSF001549">
    <property type="entry name" value="His-tRNA_synth"/>
    <property type="match status" value="1"/>
</dbReference>
<dbReference type="SUPFAM" id="SSF52954">
    <property type="entry name" value="Class II aaRS ABD-related"/>
    <property type="match status" value="1"/>
</dbReference>
<dbReference type="SUPFAM" id="SSF55681">
    <property type="entry name" value="Class II aaRS and biotin synthetases"/>
    <property type="match status" value="1"/>
</dbReference>
<dbReference type="PROSITE" id="PS50862">
    <property type="entry name" value="AA_TRNA_LIGASE_II"/>
    <property type="match status" value="1"/>
</dbReference>
<accession>B3CLR6</accession>
<comment type="catalytic activity">
    <reaction evidence="1">
        <text>tRNA(His) + L-histidine + ATP = L-histidyl-tRNA(His) + AMP + diphosphate + H(+)</text>
        <dbReference type="Rhea" id="RHEA:17313"/>
        <dbReference type="Rhea" id="RHEA-COMP:9665"/>
        <dbReference type="Rhea" id="RHEA-COMP:9689"/>
        <dbReference type="ChEBI" id="CHEBI:15378"/>
        <dbReference type="ChEBI" id="CHEBI:30616"/>
        <dbReference type="ChEBI" id="CHEBI:33019"/>
        <dbReference type="ChEBI" id="CHEBI:57595"/>
        <dbReference type="ChEBI" id="CHEBI:78442"/>
        <dbReference type="ChEBI" id="CHEBI:78527"/>
        <dbReference type="ChEBI" id="CHEBI:456215"/>
        <dbReference type="EC" id="6.1.1.21"/>
    </reaction>
</comment>
<comment type="subunit">
    <text evidence="1">Homodimer.</text>
</comment>
<comment type="subcellular location">
    <subcellularLocation>
        <location evidence="1">Cytoplasm</location>
    </subcellularLocation>
</comment>
<comment type="similarity">
    <text evidence="1">Belongs to the class-II aminoacyl-tRNA synthetase family.</text>
</comment>
<keyword id="KW-0030">Aminoacyl-tRNA synthetase</keyword>
<keyword id="KW-0067">ATP-binding</keyword>
<keyword id="KW-0963">Cytoplasm</keyword>
<keyword id="KW-0436">Ligase</keyword>
<keyword id="KW-0547">Nucleotide-binding</keyword>
<keyword id="KW-0648">Protein biosynthesis</keyword>
<reference key="1">
    <citation type="journal article" date="2008" name="Mol. Biol. Evol.">
        <title>Genome evolution of Wolbachia strain wPip from the Culex pipiens group.</title>
        <authorList>
            <person name="Klasson L."/>
            <person name="Walker T."/>
            <person name="Sebaihia M."/>
            <person name="Sanders M.J."/>
            <person name="Quail M.A."/>
            <person name="Lord A."/>
            <person name="Sanders S."/>
            <person name="Earl J."/>
            <person name="O'Neill S.L."/>
            <person name="Thomson N."/>
            <person name="Sinkins S.P."/>
            <person name="Parkhill J."/>
        </authorList>
    </citation>
    <scope>NUCLEOTIDE SEQUENCE [LARGE SCALE GENOMIC DNA]</scope>
    <source>
        <strain>wPip</strain>
    </source>
</reference>